<comment type="function">
    <text evidence="1">ATP-dependent specificity component of the Clp protease. It directs the protease to specific substrates. Can perform chaperone functions in the absence of ClpP.</text>
</comment>
<comment type="subunit">
    <text evidence="1">Component of the ClpX-ClpP complex. Forms a hexameric ring that, in the presence of ATP, binds to fourteen ClpP subunits assembled into a disk-like structure with a central cavity, resembling the structure of eukaryotic proteasomes.</text>
</comment>
<comment type="similarity">
    <text evidence="1">Belongs to the ClpX chaperone family.</text>
</comment>
<gene>
    <name evidence="1" type="primary">clpX</name>
    <name type="ordered locus">Dde_2219</name>
</gene>
<organism>
    <name type="scientific">Oleidesulfovibrio alaskensis (strain ATCC BAA-1058 / DSM 17464 / G20)</name>
    <name type="common">Desulfovibrio alaskensis</name>
    <dbReference type="NCBI Taxonomy" id="207559"/>
    <lineage>
        <taxon>Bacteria</taxon>
        <taxon>Pseudomonadati</taxon>
        <taxon>Thermodesulfobacteriota</taxon>
        <taxon>Desulfovibrionia</taxon>
        <taxon>Desulfovibrionales</taxon>
        <taxon>Desulfovibrionaceae</taxon>
        <taxon>Oleidesulfovibrio</taxon>
    </lineage>
</organism>
<feature type="chain" id="PRO_1000024548" description="ATP-dependent Clp protease ATP-binding subunit ClpX">
    <location>
        <begin position="1"/>
        <end position="417"/>
    </location>
</feature>
<feature type="domain" description="ClpX-type ZB" evidence="2">
    <location>
        <begin position="1"/>
        <end position="55"/>
    </location>
</feature>
<feature type="binding site" evidence="2">
    <location>
        <position position="14"/>
    </location>
    <ligand>
        <name>Zn(2+)</name>
        <dbReference type="ChEBI" id="CHEBI:29105"/>
    </ligand>
</feature>
<feature type="binding site" evidence="2">
    <location>
        <position position="17"/>
    </location>
    <ligand>
        <name>Zn(2+)</name>
        <dbReference type="ChEBI" id="CHEBI:29105"/>
    </ligand>
</feature>
<feature type="binding site" evidence="2">
    <location>
        <position position="36"/>
    </location>
    <ligand>
        <name>Zn(2+)</name>
        <dbReference type="ChEBI" id="CHEBI:29105"/>
    </ligand>
</feature>
<feature type="binding site" evidence="2">
    <location>
        <position position="39"/>
    </location>
    <ligand>
        <name>Zn(2+)</name>
        <dbReference type="ChEBI" id="CHEBI:29105"/>
    </ligand>
</feature>
<feature type="binding site" evidence="1">
    <location>
        <begin position="118"/>
        <end position="125"/>
    </location>
    <ligand>
        <name>ATP</name>
        <dbReference type="ChEBI" id="CHEBI:30616"/>
    </ligand>
</feature>
<proteinExistence type="inferred from homology"/>
<dbReference type="EMBL" id="CP000112">
    <property type="protein sequence ID" value="ABB39016.1"/>
    <property type="molecule type" value="Genomic_DNA"/>
</dbReference>
<dbReference type="RefSeq" id="WP_011368111.1">
    <property type="nucleotide sequence ID" value="NC_007519.1"/>
</dbReference>
<dbReference type="SMR" id="Q30Z80"/>
<dbReference type="STRING" id="207559.Dde_2219"/>
<dbReference type="KEGG" id="dde:Dde_2219"/>
<dbReference type="eggNOG" id="COG1219">
    <property type="taxonomic scope" value="Bacteria"/>
</dbReference>
<dbReference type="HOGENOM" id="CLU_014218_8_2_7"/>
<dbReference type="Proteomes" id="UP000002710">
    <property type="component" value="Chromosome"/>
</dbReference>
<dbReference type="GO" id="GO:0009376">
    <property type="term" value="C:HslUV protease complex"/>
    <property type="evidence" value="ECO:0007669"/>
    <property type="project" value="TreeGrafter"/>
</dbReference>
<dbReference type="GO" id="GO:0005524">
    <property type="term" value="F:ATP binding"/>
    <property type="evidence" value="ECO:0007669"/>
    <property type="project" value="UniProtKB-UniRule"/>
</dbReference>
<dbReference type="GO" id="GO:0016887">
    <property type="term" value="F:ATP hydrolysis activity"/>
    <property type="evidence" value="ECO:0007669"/>
    <property type="project" value="InterPro"/>
</dbReference>
<dbReference type="GO" id="GO:0140662">
    <property type="term" value="F:ATP-dependent protein folding chaperone"/>
    <property type="evidence" value="ECO:0007669"/>
    <property type="project" value="InterPro"/>
</dbReference>
<dbReference type="GO" id="GO:0046983">
    <property type="term" value="F:protein dimerization activity"/>
    <property type="evidence" value="ECO:0007669"/>
    <property type="project" value="InterPro"/>
</dbReference>
<dbReference type="GO" id="GO:0051082">
    <property type="term" value="F:unfolded protein binding"/>
    <property type="evidence" value="ECO:0007669"/>
    <property type="project" value="UniProtKB-UniRule"/>
</dbReference>
<dbReference type="GO" id="GO:0008270">
    <property type="term" value="F:zinc ion binding"/>
    <property type="evidence" value="ECO:0007669"/>
    <property type="project" value="InterPro"/>
</dbReference>
<dbReference type="GO" id="GO:0051301">
    <property type="term" value="P:cell division"/>
    <property type="evidence" value="ECO:0007669"/>
    <property type="project" value="TreeGrafter"/>
</dbReference>
<dbReference type="GO" id="GO:0051603">
    <property type="term" value="P:proteolysis involved in protein catabolic process"/>
    <property type="evidence" value="ECO:0007669"/>
    <property type="project" value="TreeGrafter"/>
</dbReference>
<dbReference type="CDD" id="cd19497">
    <property type="entry name" value="RecA-like_ClpX"/>
    <property type="match status" value="1"/>
</dbReference>
<dbReference type="FunFam" id="1.10.8.60:FF:000002">
    <property type="entry name" value="ATP-dependent Clp protease ATP-binding subunit ClpX"/>
    <property type="match status" value="1"/>
</dbReference>
<dbReference type="FunFam" id="3.40.50.300:FF:000005">
    <property type="entry name" value="ATP-dependent Clp protease ATP-binding subunit ClpX"/>
    <property type="match status" value="1"/>
</dbReference>
<dbReference type="Gene3D" id="1.10.8.60">
    <property type="match status" value="1"/>
</dbReference>
<dbReference type="Gene3D" id="6.20.220.10">
    <property type="entry name" value="ClpX chaperone, C4-type zinc finger domain"/>
    <property type="match status" value="1"/>
</dbReference>
<dbReference type="Gene3D" id="3.40.50.300">
    <property type="entry name" value="P-loop containing nucleotide triphosphate hydrolases"/>
    <property type="match status" value="1"/>
</dbReference>
<dbReference type="HAMAP" id="MF_00175">
    <property type="entry name" value="ClpX"/>
    <property type="match status" value="1"/>
</dbReference>
<dbReference type="InterPro" id="IPR003593">
    <property type="entry name" value="AAA+_ATPase"/>
</dbReference>
<dbReference type="InterPro" id="IPR050052">
    <property type="entry name" value="ATP-dep_Clp_protease_ClpX"/>
</dbReference>
<dbReference type="InterPro" id="IPR003959">
    <property type="entry name" value="ATPase_AAA_core"/>
</dbReference>
<dbReference type="InterPro" id="IPR019489">
    <property type="entry name" value="Clp_ATPase_C"/>
</dbReference>
<dbReference type="InterPro" id="IPR004487">
    <property type="entry name" value="Clp_protease_ATP-bd_su_ClpX"/>
</dbReference>
<dbReference type="InterPro" id="IPR046425">
    <property type="entry name" value="ClpX_bact"/>
</dbReference>
<dbReference type="InterPro" id="IPR027417">
    <property type="entry name" value="P-loop_NTPase"/>
</dbReference>
<dbReference type="InterPro" id="IPR010603">
    <property type="entry name" value="Znf_CppX_C4"/>
</dbReference>
<dbReference type="InterPro" id="IPR038366">
    <property type="entry name" value="Znf_CppX_C4_sf"/>
</dbReference>
<dbReference type="NCBIfam" id="TIGR00382">
    <property type="entry name" value="clpX"/>
    <property type="match status" value="1"/>
</dbReference>
<dbReference type="NCBIfam" id="NF003745">
    <property type="entry name" value="PRK05342.1"/>
    <property type="match status" value="1"/>
</dbReference>
<dbReference type="PANTHER" id="PTHR48102:SF7">
    <property type="entry name" value="ATP-DEPENDENT CLP PROTEASE ATP-BINDING SUBUNIT CLPX-LIKE, MITOCHONDRIAL"/>
    <property type="match status" value="1"/>
</dbReference>
<dbReference type="PANTHER" id="PTHR48102">
    <property type="entry name" value="ATP-DEPENDENT CLP PROTEASE ATP-BINDING SUBUNIT CLPX-LIKE, MITOCHONDRIAL-RELATED"/>
    <property type="match status" value="1"/>
</dbReference>
<dbReference type="Pfam" id="PF07724">
    <property type="entry name" value="AAA_2"/>
    <property type="match status" value="1"/>
</dbReference>
<dbReference type="Pfam" id="PF10431">
    <property type="entry name" value="ClpB_D2-small"/>
    <property type="match status" value="1"/>
</dbReference>
<dbReference type="Pfam" id="PF06689">
    <property type="entry name" value="zf-C4_ClpX"/>
    <property type="match status" value="1"/>
</dbReference>
<dbReference type="SMART" id="SM00382">
    <property type="entry name" value="AAA"/>
    <property type="match status" value="1"/>
</dbReference>
<dbReference type="SMART" id="SM01086">
    <property type="entry name" value="ClpB_D2-small"/>
    <property type="match status" value="1"/>
</dbReference>
<dbReference type="SMART" id="SM00994">
    <property type="entry name" value="zf-C4_ClpX"/>
    <property type="match status" value="1"/>
</dbReference>
<dbReference type="SUPFAM" id="SSF57716">
    <property type="entry name" value="Glucocorticoid receptor-like (DNA-binding domain)"/>
    <property type="match status" value="1"/>
</dbReference>
<dbReference type="SUPFAM" id="SSF52540">
    <property type="entry name" value="P-loop containing nucleoside triphosphate hydrolases"/>
    <property type="match status" value="1"/>
</dbReference>
<dbReference type="PROSITE" id="PS51902">
    <property type="entry name" value="CLPX_ZB"/>
    <property type="match status" value="1"/>
</dbReference>
<evidence type="ECO:0000255" key="1">
    <source>
        <dbReference type="HAMAP-Rule" id="MF_00175"/>
    </source>
</evidence>
<evidence type="ECO:0000255" key="2">
    <source>
        <dbReference type="PROSITE-ProRule" id="PRU01250"/>
    </source>
</evidence>
<protein>
    <recommendedName>
        <fullName evidence="1">ATP-dependent Clp protease ATP-binding subunit ClpX</fullName>
    </recommendedName>
</protein>
<accession>Q30Z80</accession>
<keyword id="KW-0067">ATP-binding</keyword>
<keyword id="KW-0143">Chaperone</keyword>
<keyword id="KW-0479">Metal-binding</keyword>
<keyword id="KW-0547">Nucleotide-binding</keyword>
<keyword id="KW-1185">Reference proteome</keyword>
<keyword id="KW-0862">Zinc</keyword>
<name>CLPX_OLEA2</name>
<reference key="1">
    <citation type="journal article" date="2011" name="J. Bacteriol.">
        <title>Complete genome sequence and updated annotation of Desulfovibrio alaskensis G20.</title>
        <authorList>
            <person name="Hauser L.J."/>
            <person name="Land M.L."/>
            <person name="Brown S.D."/>
            <person name="Larimer F."/>
            <person name="Keller K.L."/>
            <person name="Rapp-Giles B.J."/>
            <person name="Price M.N."/>
            <person name="Lin M."/>
            <person name="Bruce D.C."/>
            <person name="Detter J.C."/>
            <person name="Tapia R."/>
            <person name="Han C.S."/>
            <person name="Goodwin L.A."/>
            <person name="Cheng J.F."/>
            <person name="Pitluck S."/>
            <person name="Copeland A."/>
            <person name="Lucas S."/>
            <person name="Nolan M."/>
            <person name="Lapidus A.L."/>
            <person name="Palumbo A.V."/>
            <person name="Wall J.D."/>
        </authorList>
    </citation>
    <scope>NUCLEOTIDE SEQUENCE [LARGE SCALE GENOMIC DNA]</scope>
    <source>
        <strain>ATCC BAA-1058 / DSM 17464 / G20</strain>
    </source>
</reference>
<sequence>MDRKNDGSAQEPRCSFCQKGPDSVKRLISGPDVYICDACVELCNEIIAQEHVQESVDAGKLLSPAEIKARLDEYVIGQHTAKKILSVAVHNHYKRVFFAETLSDEVELEKSNILLVGSSGSGKTLLAKTLARVLNVPFAIADATTLTEAGYVGEDVENILVQLLQNADYDIEAASKGIVYIDEIDKISRKGDGPSITRDVSGEGVQQALLKIIEGTEANIPPKGGRKHPQQEFIRLDTSNILFIMGGAFIGLDKIIEQRMHGGAMGFGVKVASKKETPLSDLLGNVHPNDLVKFGLIPEFIGRIPVITHVNELAEDDLVRILQEPKNALVRQYQKLFELDHVKLRFTSNALRAVARQAIERKTGARGLRNVLESVMLEIMFNLPSMTGVKECVINTAVVEEGKEPIFLYQTEAKTGT</sequence>